<sequence length="190" mass="20688">MADSIIQSPDLGDVTGYLRERIRTVPDWPQPGVMFRDITPLLQDPKTLRVLIDVFVHRYMDAQLDLVAGIDARGFILGAIVAYELNLGFVPIRKKGKLPFQTVAEEYELEYGSATVEIHADACKTGDRVLLVDDLIATGGTMMAGRKLLERLGATVVEGAAIVDLPELGGSKLLHGAGLPLFTVCKFEGH</sequence>
<name>APT_CUPTR</name>
<evidence type="ECO:0000255" key="1">
    <source>
        <dbReference type="HAMAP-Rule" id="MF_00004"/>
    </source>
</evidence>
<protein>
    <recommendedName>
        <fullName evidence="1">Adenine phosphoribosyltransferase</fullName>
        <shortName evidence="1">APRT</shortName>
        <ecNumber evidence="1">2.4.2.7</ecNumber>
    </recommendedName>
</protein>
<keyword id="KW-0963">Cytoplasm</keyword>
<keyword id="KW-0328">Glycosyltransferase</keyword>
<keyword id="KW-0660">Purine salvage</keyword>
<keyword id="KW-0808">Transferase</keyword>
<comment type="function">
    <text evidence="1">Catalyzes a salvage reaction resulting in the formation of AMP, that is energically less costly than de novo synthesis.</text>
</comment>
<comment type="catalytic activity">
    <reaction evidence="1">
        <text>AMP + diphosphate = 5-phospho-alpha-D-ribose 1-diphosphate + adenine</text>
        <dbReference type="Rhea" id="RHEA:16609"/>
        <dbReference type="ChEBI" id="CHEBI:16708"/>
        <dbReference type="ChEBI" id="CHEBI:33019"/>
        <dbReference type="ChEBI" id="CHEBI:58017"/>
        <dbReference type="ChEBI" id="CHEBI:456215"/>
        <dbReference type="EC" id="2.4.2.7"/>
    </reaction>
</comment>
<comment type="pathway">
    <text evidence="1">Purine metabolism; AMP biosynthesis via salvage pathway; AMP from adenine: step 1/1.</text>
</comment>
<comment type="subunit">
    <text evidence="1">Homodimer.</text>
</comment>
<comment type="subcellular location">
    <subcellularLocation>
        <location evidence="1">Cytoplasm</location>
    </subcellularLocation>
</comment>
<comment type="similarity">
    <text evidence="1">Belongs to the purine/pyrimidine phosphoribosyltransferase family.</text>
</comment>
<feature type="chain" id="PRO_1000088966" description="Adenine phosphoribosyltransferase">
    <location>
        <begin position="1"/>
        <end position="190"/>
    </location>
</feature>
<gene>
    <name evidence="1" type="primary">apt</name>
    <name type="ordered locus">RALTA_A0339</name>
</gene>
<proteinExistence type="inferred from homology"/>
<reference key="1">
    <citation type="journal article" date="2008" name="Genome Res.">
        <title>Genome sequence of the beta-rhizobium Cupriavidus taiwanensis and comparative genomics of rhizobia.</title>
        <authorList>
            <person name="Amadou C."/>
            <person name="Pascal G."/>
            <person name="Mangenot S."/>
            <person name="Glew M."/>
            <person name="Bontemps C."/>
            <person name="Capela D."/>
            <person name="Carrere S."/>
            <person name="Cruveiller S."/>
            <person name="Dossat C."/>
            <person name="Lajus A."/>
            <person name="Marchetti M."/>
            <person name="Poinsot V."/>
            <person name="Rouy Z."/>
            <person name="Servin B."/>
            <person name="Saad M."/>
            <person name="Schenowitz C."/>
            <person name="Barbe V."/>
            <person name="Batut J."/>
            <person name="Medigue C."/>
            <person name="Masson-Boivin C."/>
        </authorList>
    </citation>
    <scope>NUCLEOTIDE SEQUENCE [LARGE SCALE GENOMIC DNA]</scope>
    <source>
        <strain>DSM 17343 / BCRC 17206 / CCUG 44338 / CIP 107171 / LMG 19424 / R1</strain>
    </source>
</reference>
<accession>B2AGV9</accession>
<organism>
    <name type="scientific">Cupriavidus taiwanensis (strain DSM 17343 / BCRC 17206 / CCUG 44338 / CIP 107171 / LMG 19424 / R1)</name>
    <name type="common">Ralstonia taiwanensis (strain LMG 19424)</name>
    <dbReference type="NCBI Taxonomy" id="977880"/>
    <lineage>
        <taxon>Bacteria</taxon>
        <taxon>Pseudomonadati</taxon>
        <taxon>Pseudomonadota</taxon>
        <taxon>Betaproteobacteria</taxon>
        <taxon>Burkholderiales</taxon>
        <taxon>Burkholderiaceae</taxon>
        <taxon>Cupriavidus</taxon>
    </lineage>
</organism>
<dbReference type="EC" id="2.4.2.7" evidence="1"/>
<dbReference type="EMBL" id="CU633749">
    <property type="protein sequence ID" value="CAP63008.1"/>
    <property type="molecule type" value="Genomic_DNA"/>
</dbReference>
<dbReference type="RefSeq" id="WP_012351673.1">
    <property type="nucleotide sequence ID" value="NC_010528.1"/>
</dbReference>
<dbReference type="SMR" id="B2AGV9"/>
<dbReference type="GeneID" id="29760674"/>
<dbReference type="KEGG" id="cti:RALTA_A0339"/>
<dbReference type="eggNOG" id="COG0503">
    <property type="taxonomic scope" value="Bacteria"/>
</dbReference>
<dbReference type="HOGENOM" id="CLU_063339_3_0_4"/>
<dbReference type="BioCyc" id="CTAI977880:RALTA_RS01655-MONOMER"/>
<dbReference type="UniPathway" id="UPA00588">
    <property type="reaction ID" value="UER00646"/>
</dbReference>
<dbReference type="Proteomes" id="UP000001692">
    <property type="component" value="Chromosome 1"/>
</dbReference>
<dbReference type="GO" id="GO:0005737">
    <property type="term" value="C:cytoplasm"/>
    <property type="evidence" value="ECO:0007669"/>
    <property type="project" value="UniProtKB-SubCell"/>
</dbReference>
<dbReference type="GO" id="GO:0003999">
    <property type="term" value="F:adenine phosphoribosyltransferase activity"/>
    <property type="evidence" value="ECO:0007669"/>
    <property type="project" value="UniProtKB-UniRule"/>
</dbReference>
<dbReference type="GO" id="GO:0006168">
    <property type="term" value="P:adenine salvage"/>
    <property type="evidence" value="ECO:0007669"/>
    <property type="project" value="InterPro"/>
</dbReference>
<dbReference type="GO" id="GO:0044209">
    <property type="term" value="P:AMP salvage"/>
    <property type="evidence" value="ECO:0007669"/>
    <property type="project" value="UniProtKB-UniRule"/>
</dbReference>
<dbReference type="GO" id="GO:0006166">
    <property type="term" value="P:purine ribonucleoside salvage"/>
    <property type="evidence" value="ECO:0007669"/>
    <property type="project" value="UniProtKB-KW"/>
</dbReference>
<dbReference type="CDD" id="cd06223">
    <property type="entry name" value="PRTases_typeI"/>
    <property type="match status" value="1"/>
</dbReference>
<dbReference type="FunFam" id="3.40.50.2020:FF:000021">
    <property type="entry name" value="Adenine phosphoribosyltransferase"/>
    <property type="match status" value="1"/>
</dbReference>
<dbReference type="Gene3D" id="3.40.50.2020">
    <property type="match status" value="1"/>
</dbReference>
<dbReference type="HAMAP" id="MF_00004">
    <property type="entry name" value="Aden_phosphoribosyltr"/>
    <property type="match status" value="1"/>
</dbReference>
<dbReference type="InterPro" id="IPR005764">
    <property type="entry name" value="Ade_phspho_trans"/>
</dbReference>
<dbReference type="InterPro" id="IPR050120">
    <property type="entry name" value="Adenine_PRTase"/>
</dbReference>
<dbReference type="InterPro" id="IPR000836">
    <property type="entry name" value="PRibTrfase_dom"/>
</dbReference>
<dbReference type="InterPro" id="IPR029057">
    <property type="entry name" value="PRTase-like"/>
</dbReference>
<dbReference type="NCBIfam" id="TIGR01090">
    <property type="entry name" value="apt"/>
    <property type="match status" value="1"/>
</dbReference>
<dbReference type="NCBIfam" id="NF002634">
    <property type="entry name" value="PRK02304.1-3"/>
    <property type="match status" value="1"/>
</dbReference>
<dbReference type="NCBIfam" id="NF002636">
    <property type="entry name" value="PRK02304.1-5"/>
    <property type="match status" value="1"/>
</dbReference>
<dbReference type="PANTHER" id="PTHR11776">
    <property type="entry name" value="ADENINE PHOSPHORIBOSYLTRANSFERASE"/>
    <property type="match status" value="1"/>
</dbReference>
<dbReference type="PANTHER" id="PTHR11776:SF7">
    <property type="entry name" value="PHOSPHORIBOSYLTRANSFERASE DOMAIN-CONTAINING PROTEIN"/>
    <property type="match status" value="1"/>
</dbReference>
<dbReference type="Pfam" id="PF00156">
    <property type="entry name" value="Pribosyltran"/>
    <property type="match status" value="1"/>
</dbReference>
<dbReference type="SUPFAM" id="SSF53271">
    <property type="entry name" value="PRTase-like"/>
    <property type="match status" value="1"/>
</dbReference>
<dbReference type="PROSITE" id="PS00103">
    <property type="entry name" value="PUR_PYR_PR_TRANSFER"/>
    <property type="match status" value="1"/>
</dbReference>